<organism>
    <name type="scientific">Lottia gigantea</name>
    <name type="common">Giant owl limpet</name>
    <dbReference type="NCBI Taxonomy" id="225164"/>
    <lineage>
        <taxon>Eukaryota</taxon>
        <taxon>Metazoa</taxon>
        <taxon>Spiralia</taxon>
        <taxon>Lophotrochozoa</taxon>
        <taxon>Mollusca</taxon>
        <taxon>Gastropoda</taxon>
        <taxon>Patellogastropoda</taxon>
        <taxon>Lottioidea</taxon>
        <taxon>Lottiidae</taxon>
        <taxon>Lottia</taxon>
    </lineage>
</organism>
<keyword id="KW-0903">Direct protein sequencing</keyword>
<keyword id="KW-0325">Glycoprotein</keyword>
<keyword id="KW-0964">Secreted</keyword>
<keyword id="KW-0732">Signal</keyword>
<dbReference type="EMBL" id="FC641565">
    <property type="status" value="NOT_ANNOTATED_CDS"/>
    <property type="molecule type" value="mRNA"/>
</dbReference>
<dbReference type="SMR" id="B3A0Q0"/>
<dbReference type="GO" id="GO:0005576">
    <property type="term" value="C:extracellular region"/>
    <property type="evidence" value="ECO:0007669"/>
    <property type="project" value="UniProtKB-SubCell"/>
</dbReference>
<feature type="signal peptide" evidence="1">
    <location>
        <begin position="1"/>
        <end position="15"/>
    </location>
</feature>
<feature type="chain" id="PRO_0000415233" description="Uncharacterized shell protein 5" evidence="1">
    <location>
        <begin position="16"/>
        <end position="219"/>
    </location>
</feature>
<feature type="region of interest" description="Disordered" evidence="2">
    <location>
        <begin position="138"/>
        <end position="174"/>
    </location>
</feature>
<feature type="glycosylation site" description="N-linked (GlcNAc...) asparagine" evidence="1">
    <location>
        <position position="118"/>
    </location>
</feature>
<protein>
    <recommendedName>
        <fullName>Uncharacterized shell protein 5</fullName>
        <shortName>LUSP-5</shortName>
    </recommendedName>
</protein>
<name>USP5_LOTGI</name>
<reference evidence="5" key="1">
    <citation type="submission" date="2007-12" db="EMBL/GenBank/DDBJ databases">
        <title>DOE Joint Genome Institute Lottia gigantea EST project.</title>
        <authorList>
            <person name="Richardson P."/>
            <person name="Lucas S."/>
            <person name="Rokhsar D."/>
            <person name="Wang M."/>
            <person name="Lindquist E.A."/>
        </authorList>
    </citation>
    <scope>NUCLEOTIDE SEQUENCE [LARGE SCALE MRNA]</scope>
    <scope>IDENTIFICATION</scope>
    <source>
        <tissue evidence="4">Gonad</tissue>
    </source>
</reference>
<reference key="2">
    <citation type="journal article" date="2013" name="FEBS J.">
        <title>The shell-forming proteome of Lottia gigantea reveals both deep conservations and lineage-specific novelties.</title>
        <authorList>
            <person name="Marie B."/>
            <person name="Jackson D.J."/>
            <person name="Ramos-Silva P."/>
            <person name="Zanella-Cleon I."/>
            <person name="Guichard N."/>
            <person name="Marin F."/>
        </authorList>
    </citation>
    <scope>PROTEIN SEQUENCE OF 152-167; 176-193 AND 201-215</scope>
    <scope>SUBCELLULAR LOCATION</scope>
    <scope>TISSUE SPECIFICITY</scope>
    <source>
        <tissue>Shell</tissue>
    </source>
</reference>
<sequence length="219" mass="24347">MYVLFLLSWVLVAGALPAMKKSAIPVLEAIERCRVLGVDIEAYGSKDEILATTKESNNLRECFDILVSADQTALTEVAMLGVLMKRLQTRQALGEPIYELLSKGLPKGAGAKAVTNGNMSGVGQALLRRHKRQVMPLGEVGEDPGKRARKRRLGLPIGEPGEDVGKRMRQRQQGRARQNYNTWLRKYYAWYQRAQRYYARKRGARPAAAAKPAAKKPAV</sequence>
<evidence type="ECO:0000255" key="1"/>
<evidence type="ECO:0000256" key="2">
    <source>
        <dbReference type="SAM" id="MobiDB-lite"/>
    </source>
</evidence>
<evidence type="ECO:0000269" key="3">
    <source>
    </source>
</evidence>
<evidence type="ECO:0000269" key="4">
    <source ref="1"/>
</evidence>
<evidence type="ECO:0000305" key="5"/>
<accession>B3A0Q0</accession>
<comment type="subcellular location">
    <subcellularLocation>
        <location evidence="3">Secreted</location>
    </subcellularLocation>
</comment>
<comment type="tissue specificity">
    <text evidence="3">Component of the acid-insoluble and acid-soluble organic matrix of calcified layers of the shell (at protein level).</text>
</comment>
<proteinExistence type="evidence at protein level"/>